<sequence>MWKEFKSFAIRGNVIDLAIGVIIGGAFGKIVTSLVNDLMMPLLGLLLGGLDFSALSFTFVDAEIKYGLFIQSIVNFFIISFSIFLFIRYISKLKKKDAEEEKAAPDPQEELLKEIRDLLKEQTNRS</sequence>
<accession>Q65E27</accession>
<accession>Q62PJ9</accession>
<comment type="function">
    <text evidence="1">Channel that opens in response to stretch forces in the membrane lipid bilayer. May participate in the regulation of osmotic pressure changes within the cell.</text>
</comment>
<comment type="subunit">
    <text evidence="1">Homopentamer.</text>
</comment>
<comment type="subcellular location">
    <subcellularLocation>
        <location evidence="1">Cell membrane</location>
        <topology evidence="1">Multi-pass membrane protein</topology>
    </subcellularLocation>
</comment>
<comment type="similarity">
    <text evidence="1">Belongs to the MscL family.</text>
</comment>
<protein>
    <recommendedName>
        <fullName evidence="1">Large-conductance mechanosensitive channel</fullName>
    </recommendedName>
</protein>
<evidence type="ECO:0000255" key="1">
    <source>
        <dbReference type="HAMAP-Rule" id="MF_00115"/>
    </source>
</evidence>
<feature type="chain" id="PRO_0000237973" description="Large-conductance mechanosensitive channel">
    <location>
        <begin position="1"/>
        <end position="126"/>
    </location>
</feature>
<feature type="transmembrane region" description="Helical" evidence="1">
    <location>
        <begin position="14"/>
        <end position="34"/>
    </location>
</feature>
<feature type="transmembrane region" description="Helical" evidence="1">
    <location>
        <begin position="40"/>
        <end position="60"/>
    </location>
</feature>
<feature type="transmembrane region" description="Helical" evidence="1">
    <location>
        <begin position="67"/>
        <end position="87"/>
    </location>
</feature>
<name>MSCL_BACLD</name>
<gene>
    <name evidence="1" type="primary">mscL</name>
    <name type="ordered locus">BLi03872</name>
    <name type="ordered locus">BL02495</name>
</gene>
<reference key="1">
    <citation type="journal article" date="2004" name="J. Mol. Microbiol. Biotechnol.">
        <title>The complete genome sequence of Bacillus licheniformis DSM13, an organism with great industrial potential.</title>
        <authorList>
            <person name="Veith B."/>
            <person name="Herzberg C."/>
            <person name="Steckel S."/>
            <person name="Feesche J."/>
            <person name="Maurer K.H."/>
            <person name="Ehrenreich P."/>
            <person name="Baeumer S."/>
            <person name="Henne A."/>
            <person name="Liesegang H."/>
            <person name="Merkl R."/>
            <person name="Ehrenreich A."/>
            <person name="Gottschalk G."/>
        </authorList>
    </citation>
    <scope>NUCLEOTIDE SEQUENCE [LARGE SCALE GENOMIC DNA]</scope>
    <source>
        <strain>ATCC 14580 / DSM 13 / JCM 2505 / CCUG 7422 / NBRC 12200 / NCIMB 9375 / NCTC 10341 / NRRL NRS-1264 / Gibson 46</strain>
    </source>
</reference>
<reference key="2">
    <citation type="journal article" date="2004" name="Genome Biol.">
        <title>Complete genome sequence of the industrial bacterium Bacillus licheniformis and comparisons with closely related Bacillus species.</title>
        <authorList>
            <person name="Rey M.W."/>
            <person name="Ramaiya P."/>
            <person name="Nelson B.A."/>
            <person name="Brody-Karpin S.D."/>
            <person name="Zaretsky E.J."/>
            <person name="Tang M."/>
            <person name="Lopez de Leon A."/>
            <person name="Xiang H."/>
            <person name="Gusti V."/>
            <person name="Clausen I.G."/>
            <person name="Olsen P.B."/>
            <person name="Rasmussen M.D."/>
            <person name="Andersen J.T."/>
            <person name="Joergensen P.L."/>
            <person name="Larsen T.S."/>
            <person name="Sorokin A."/>
            <person name="Bolotin A."/>
            <person name="Lapidus A."/>
            <person name="Galleron N."/>
            <person name="Ehrlich S.D."/>
            <person name="Berka R.M."/>
        </authorList>
    </citation>
    <scope>NUCLEOTIDE SEQUENCE [LARGE SCALE GENOMIC DNA]</scope>
    <source>
        <strain>ATCC 14580 / DSM 13 / JCM 2505 / CCUG 7422 / NBRC 12200 / NCIMB 9375 / NCTC 10341 / NRRL NRS-1264 / Gibson 46</strain>
    </source>
</reference>
<dbReference type="EMBL" id="AE017333">
    <property type="protein sequence ID" value="AAU42687.1"/>
    <property type="molecule type" value="Genomic_DNA"/>
</dbReference>
<dbReference type="EMBL" id="CP000002">
    <property type="protein sequence ID" value="AAU25312.1"/>
    <property type="molecule type" value="Genomic_DNA"/>
</dbReference>
<dbReference type="RefSeq" id="WP_003185900.1">
    <property type="nucleotide sequence ID" value="NC_006322.1"/>
</dbReference>
<dbReference type="SMR" id="Q65E27"/>
<dbReference type="STRING" id="279010.BL02495"/>
<dbReference type="GeneID" id="92859553"/>
<dbReference type="KEGG" id="bld:BLi03872"/>
<dbReference type="KEGG" id="bli:BL02495"/>
<dbReference type="eggNOG" id="COG1970">
    <property type="taxonomic scope" value="Bacteria"/>
</dbReference>
<dbReference type="HOGENOM" id="CLU_095787_0_0_9"/>
<dbReference type="Proteomes" id="UP000000606">
    <property type="component" value="Chromosome"/>
</dbReference>
<dbReference type="GO" id="GO:0005886">
    <property type="term" value="C:plasma membrane"/>
    <property type="evidence" value="ECO:0007669"/>
    <property type="project" value="UniProtKB-SubCell"/>
</dbReference>
<dbReference type="GO" id="GO:0008381">
    <property type="term" value="F:mechanosensitive monoatomic ion channel activity"/>
    <property type="evidence" value="ECO:0007669"/>
    <property type="project" value="UniProtKB-UniRule"/>
</dbReference>
<dbReference type="Gene3D" id="1.10.1200.120">
    <property type="entry name" value="Large-conductance mechanosensitive channel, MscL, domain 1"/>
    <property type="match status" value="1"/>
</dbReference>
<dbReference type="HAMAP" id="MF_00115">
    <property type="entry name" value="MscL"/>
    <property type="match status" value="1"/>
</dbReference>
<dbReference type="InterPro" id="IPR019823">
    <property type="entry name" value="Mechanosensitive_channel_CS"/>
</dbReference>
<dbReference type="InterPro" id="IPR001185">
    <property type="entry name" value="MS_channel"/>
</dbReference>
<dbReference type="InterPro" id="IPR037673">
    <property type="entry name" value="MSC/AndL"/>
</dbReference>
<dbReference type="InterPro" id="IPR036019">
    <property type="entry name" value="MscL_channel"/>
</dbReference>
<dbReference type="NCBIfam" id="TIGR00220">
    <property type="entry name" value="mscL"/>
    <property type="match status" value="1"/>
</dbReference>
<dbReference type="NCBIfam" id="NF001843">
    <property type="entry name" value="PRK00567.1-4"/>
    <property type="match status" value="1"/>
</dbReference>
<dbReference type="NCBIfam" id="NF010560">
    <property type="entry name" value="PRK13955.1"/>
    <property type="match status" value="1"/>
</dbReference>
<dbReference type="PANTHER" id="PTHR30266:SF2">
    <property type="entry name" value="LARGE-CONDUCTANCE MECHANOSENSITIVE CHANNEL"/>
    <property type="match status" value="1"/>
</dbReference>
<dbReference type="PANTHER" id="PTHR30266">
    <property type="entry name" value="MECHANOSENSITIVE CHANNEL MSCL"/>
    <property type="match status" value="1"/>
</dbReference>
<dbReference type="Pfam" id="PF01741">
    <property type="entry name" value="MscL"/>
    <property type="match status" value="1"/>
</dbReference>
<dbReference type="PRINTS" id="PR01264">
    <property type="entry name" value="MECHCHANNEL"/>
</dbReference>
<dbReference type="SUPFAM" id="SSF81330">
    <property type="entry name" value="Gated mechanosensitive channel"/>
    <property type="match status" value="1"/>
</dbReference>
<dbReference type="PROSITE" id="PS01327">
    <property type="entry name" value="MSCL"/>
    <property type="match status" value="1"/>
</dbReference>
<organism>
    <name type="scientific">Bacillus licheniformis (strain ATCC 14580 / DSM 13 / JCM 2505 / CCUG 7422 / NBRC 12200 / NCIMB 9375 / NCTC 10341 / NRRL NRS-1264 / Gibson 46)</name>
    <dbReference type="NCBI Taxonomy" id="279010"/>
    <lineage>
        <taxon>Bacteria</taxon>
        <taxon>Bacillati</taxon>
        <taxon>Bacillota</taxon>
        <taxon>Bacilli</taxon>
        <taxon>Bacillales</taxon>
        <taxon>Bacillaceae</taxon>
        <taxon>Bacillus</taxon>
    </lineage>
</organism>
<proteinExistence type="inferred from homology"/>
<keyword id="KW-1003">Cell membrane</keyword>
<keyword id="KW-0407">Ion channel</keyword>
<keyword id="KW-0406">Ion transport</keyword>
<keyword id="KW-0472">Membrane</keyword>
<keyword id="KW-1185">Reference proteome</keyword>
<keyword id="KW-0812">Transmembrane</keyword>
<keyword id="KW-1133">Transmembrane helix</keyword>
<keyword id="KW-0813">Transport</keyword>